<feature type="chain" id="PRO_0000158441" description="Ribose-5-phosphate isomerase A 1">
    <location>
        <begin position="1"/>
        <end position="224"/>
    </location>
</feature>
<feature type="active site" description="Proton acceptor" evidence="1">
    <location>
        <position position="107"/>
    </location>
</feature>
<feature type="binding site" evidence="1">
    <location>
        <begin position="29"/>
        <end position="32"/>
    </location>
    <ligand>
        <name>substrate</name>
    </ligand>
</feature>
<feature type="binding site" evidence="1">
    <location>
        <begin position="85"/>
        <end position="88"/>
    </location>
    <ligand>
        <name>substrate</name>
    </ligand>
</feature>
<feature type="binding site" evidence="1">
    <location>
        <begin position="98"/>
        <end position="101"/>
    </location>
    <ligand>
        <name>substrate</name>
    </ligand>
</feature>
<feature type="binding site" evidence="1">
    <location>
        <position position="125"/>
    </location>
    <ligand>
        <name>substrate</name>
    </ligand>
</feature>
<evidence type="ECO:0000255" key="1">
    <source>
        <dbReference type="HAMAP-Rule" id="MF_00170"/>
    </source>
</evidence>
<protein>
    <recommendedName>
        <fullName evidence="1">Ribose-5-phosphate isomerase A 1</fullName>
        <ecNumber evidence="1">5.3.1.6</ecNumber>
    </recommendedName>
    <alternativeName>
        <fullName evidence="1">Phosphoriboisomerase A 1</fullName>
        <shortName evidence="1">PRI 1</shortName>
    </alternativeName>
</protein>
<accession>Q8EN78</accession>
<sequence>MNEQDKLKKAVGEKAATMVKDGMKVGLGSGSTVYWMIRSLGERIQQDGLKIEGIPSSNQTATWAEEAGIPLTDFSNVKELDITIDGADEVDANNHLIKGGGAALFREKIIAQAAKEFVIIVDQSKVVETLGEFSLPVEVLPFSWQRTANEISKLGCVPTVRVHEEEPLVTDNGNYILDCPFKVIPHPDKLNKEIKSIVGVIETGLFIDMATTVIVGEKDNIYIK</sequence>
<organism>
    <name type="scientific">Oceanobacillus iheyensis (strain DSM 14371 / CIP 107618 / JCM 11309 / KCTC 3954 / HTE831)</name>
    <dbReference type="NCBI Taxonomy" id="221109"/>
    <lineage>
        <taxon>Bacteria</taxon>
        <taxon>Bacillati</taxon>
        <taxon>Bacillota</taxon>
        <taxon>Bacilli</taxon>
        <taxon>Bacillales</taxon>
        <taxon>Bacillaceae</taxon>
        <taxon>Oceanobacillus</taxon>
    </lineage>
</organism>
<proteinExistence type="inferred from homology"/>
<keyword id="KW-0413">Isomerase</keyword>
<keyword id="KW-1185">Reference proteome</keyword>
<comment type="function">
    <text evidence="1">Catalyzes the reversible conversion of ribose-5-phosphate to ribulose 5-phosphate.</text>
</comment>
<comment type="catalytic activity">
    <reaction evidence="1">
        <text>aldehydo-D-ribose 5-phosphate = D-ribulose 5-phosphate</text>
        <dbReference type="Rhea" id="RHEA:14657"/>
        <dbReference type="ChEBI" id="CHEBI:58121"/>
        <dbReference type="ChEBI" id="CHEBI:58273"/>
        <dbReference type="EC" id="5.3.1.6"/>
    </reaction>
</comment>
<comment type="pathway">
    <text evidence="1">Carbohydrate degradation; pentose phosphate pathway; D-ribose 5-phosphate from D-ribulose 5-phosphate (non-oxidative stage): step 1/1.</text>
</comment>
<comment type="subunit">
    <text evidence="1">Homodimer.</text>
</comment>
<comment type="similarity">
    <text evidence="1">Belongs to the ribose 5-phosphate isomerase family.</text>
</comment>
<reference key="1">
    <citation type="journal article" date="2002" name="Nucleic Acids Res.">
        <title>Genome sequence of Oceanobacillus iheyensis isolated from the Iheya Ridge and its unexpected adaptive capabilities to extreme environments.</title>
        <authorList>
            <person name="Takami H."/>
            <person name="Takaki Y."/>
            <person name="Uchiyama I."/>
        </authorList>
    </citation>
    <scope>NUCLEOTIDE SEQUENCE [LARGE SCALE GENOMIC DNA]</scope>
    <source>
        <strain>DSM 14371 / CIP 107618 / JCM 11309 / KCTC 3954 / HTE831</strain>
    </source>
</reference>
<name>RPIA1_OCEIH</name>
<dbReference type="EC" id="5.3.1.6" evidence="1"/>
<dbReference type="EMBL" id="BA000028">
    <property type="protein sequence ID" value="BAC14565.1"/>
    <property type="molecule type" value="Genomic_DNA"/>
</dbReference>
<dbReference type="RefSeq" id="WP_011067002.1">
    <property type="nucleotide sequence ID" value="NC_004193.1"/>
</dbReference>
<dbReference type="SMR" id="Q8EN78"/>
<dbReference type="STRING" id="221109.gene:10734861"/>
<dbReference type="KEGG" id="oih:OB2609"/>
<dbReference type="eggNOG" id="COG0120">
    <property type="taxonomic scope" value="Bacteria"/>
</dbReference>
<dbReference type="HOGENOM" id="CLU_056590_1_0_9"/>
<dbReference type="OrthoDB" id="5870696at2"/>
<dbReference type="PhylomeDB" id="Q8EN78"/>
<dbReference type="UniPathway" id="UPA00115">
    <property type="reaction ID" value="UER00412"/>
</dbReference>
<dbReference type="Proteomes" id="UP000000822">
    <property type="component" value="Chromosome"/>
</dbReference>
<dbReference type="GO" id="GO:0005829">
    <property type="term" value="C:cytosol"/>
    <property type="evidence" value="ECO:0007669"/>
    <property type="project" value="TreeGrafter"/>
</dbReference>
<dbReference type="GO" id="GO:0004751">
    <property type="term" value="F:ribose-5-phosphate isomerase activity"/>
    <property type="evidence" value="ECO:0007669"/>
    <property type="project" value="UniProtKB-UniRule"/>
</dbReference>
<dbReference type="GO" id="GO:0006014">
    <property type="term" value="P:D-ribose metabolic process"/>
    <property type="evidence" value="ECO:0007669"/>
    <property type="project" value="TreeGrafter"/>
</dbReference>
<dbReference type="GO" id="GO:0009052">
    <property type="term" value="P:pentose-phosphate shunt, non-oxidative branch"/>
    <property type="evidence" value="ECO:0007669"/>
    <property type="project" value="UniProtKB-UniRule"/>
</dbReference>
<dbReference type="CDD" id="cd01398">
    <property type="entry name" value="RPI_A"/>
    <property type="match status" value="1"/>
</dbReference>
<dbReference type="FunFam" id="3.40.50.1360:FF:000001">
    <property type="entry name" value="Ribose-5-phosphate isomerase A"/>
    <property type="match status" value="1"/>
</dbReference>
<dbReference type="Gene3D" id="3.30.70.260">
    <property type="match status" value="1"/>
</dbReference>
<dbReference type="Gene3D" id="3.40.50.1360">
    <property type="match status" value="1"/>
</dbReference>
<dbReference type="HAMAP" id="MF_00170">
    <property type="entry name" value="Rib_5P_isom_A"/>
    <property type="match status" value="1"/>
</dbReference>
<dbReference type="InterPro" id="IPR037171">
    <property type="entry name" value="NagB/RpiA_transferase-like"/>
</dbReference>
<dbReference type="InterPro" id="IPR020672">
    <property type="entry name" value="Ribose5P_isomerase_typA_subgr"/>
</dbReference>
<dbReference type="InterPro" id="IPR004788">
    <property type="entry name" value="Ribose5P_isomerase_type_A"/>
</dbReference>
<dbReference type="NCBIfam" id="NF001924">
    <property type="entry name" value="PRK00702.1"/>
    <property type="match status" value="1"/>
</dbReference>
<dbReference type="NCBIfam" id="TIGR00021">
    <property type="entry name" value="rpiA"/>
    <property type="match status" value="1"/>
</dbReference>
<dbReference type="PANTHER" id="PTHR11934">
    <property type="entry name" value="RIBOSE-5-PHOSPHATE ISOMERASE"/>
    <property type="match status" value="1"/>
</dbReference>
<dbReference type="PANTHER" id="PTHR11934:SF0">
    <property type="entry name" value="RIBOSE-5-PHOSPHATE ISOMERASE"/>
    <property type="match status" value="1"/>
</dbReference>
<dbReference type="Pfam" id="PF06026">
    <property type="entry name" value="Rib_5-P_isom_A"/>
    <property type="match status" value="1"/>
</dbReference>
<dbReference type="SUPFAM" id="SSF75445">
    <property type="entry name" value="D-ribose-5-phosphate isomerase (RpiA), lid domain"/>
    <property type="match status" value="1"/>
</dbReference>
<dbReference type="SUPFAM" id="SSF100950">
    <property type="entry name" value="NagB/RpiA/CoA transferase-like"/>
    <property type="match status" value="1"/>
</dbReference>
<gene>
    <name evidence="1" type="primary">rpiA1</name>
    <name type="ordered locus">OB2609</name>
</gene>